<sequence length="161" mass="18064">MPSFDVVSEANMIEVKNAIEQSNKEISTRFDFKGSDARVEQKERELTLFADDDFKLGQVKDVLIGKLAKRNVDVRFLDYGKVEKIGGDKVKQVVTVKKGVTGDLAKKIVRLVKDSKIKVQASIQGDAVRISGTKRDDLQSTIAMLRKDVTDTPLDFNNFRD</sequence>
<name>Y2555_BURCH</name>
<proteinExistence type="inferred from homology"/>
<reference key="1">
    <citation type="submission" date="2006-08" db="EMBL/GenBank/DDBJ databases">
        <title>Complete sequence of chromosome 1 of Burkholderia cenocepacia HI2424.</title>
        <authorList>
            <person name="Copeland A."/>
            <person name="Lucas S."/>
            <person name="Lapidus A."/>
            <person name="Barry K."/>
            <person name="Detter J.C."/>
            <person name="Glavina del Rio T."/>
            <person name="Hammon N."/>
            <person name="Israni S."/>
            <person name="Pitluck S."/>
            <person name="Chain P."/>
            <person name="Malfatti S."/>
            <person name="Shin M."/>
            <person name="Vergez L."/>
            <person name="Schmutz J."/>
            <person name="Larimer F."/>
            <person name="Land M."/>
            <person name="Hauser L."/>
            <person name="Kyrpides N."/>
            <person name="Kim E."/>
            <person name="LiPuma J.J."/>
            <person name="Gonzalez C.F."/>
            <person name="Konstantinidis K."/>
            <person name="Tiedje J.M."/>
            <person name="Richardson P."/>
        </authorList>
    </citation>
    <scope>NUCLEOTIDE SEQUENCE [LARGE SCALE GENOMIC DNA]</scope>
    <source>
        <strain>HI2424</strain>
    </source>
</reference>
<organism>
    <name type="scientific">Burkholderia cenocepacia (strain HI2424)</name>
    <dbReference type="NCBI Taxonomy" id="331272"/>
    <lineage>
        <taxon>Bacteria</taxon>
        <taxon>Pseudomonadati</taxon>
        <taxon>Pseudomonadota</taxon>
        <taxon>Betaproteobacteria</taxon>
        <taxon>Burkholderiales</taxon>
        <taxon>Burkholderiaceae</taxon>
        <taxon>Burkholderia</taxon>
        <taxon>Burkholderia cepacia complex</taxon>
    </lineage>
</organism>
<accession>A0K9X8</accession>
<protein>
    <recommendedName>
        <fullName evidence="1">Nucleotide-binding protein Bcen2424_2555</fullName>
    </recommendedName>
</protein>
<gene>
    <name type="ordered locus">Bcen2424_2555</name>
</gene>
<evidence type="ECO:0000255" key="1">
    <source>
        <dbReference type="HAMAP-Rule" id="MF_00632"/>
    </source>
</evidence>
<feature type="chain" id="PRO_1000051716" description="Nucleotide-binding protein Bcen2424_2555">
    <location>
        <begin position="1"/>
        <end position="161"/>
    </location>
</feature>
<keyword id="KW-0547">Nucleotide-binding</keyword>
<dbReference type="EMBL" id="CP000458">
    <property type="protein sequence ID" value="ABK09305.1"/>
    <property type="molecule type" value="Genomic_DNA"/>
</dbReference>
<dbReference type="RefSeq" id="WP_006478013.1">
    <property type="nucleotide sequence ID" value="NC_008542.1"/>
</dbReference>
<dbReference type="SMR" id="A0K9X8"/>
<dbReference type="KEGG" id="bch:Bcen2424_2555"/>
<dbReference type="HOGENOM" id="CLU_099839_1_0_4"/>
<dbReference type="GO" id="GO:0005829">
    <property type="term" value="C:cytosol"/>
    <property type="evidence" value="ECO:0007669"/>
    <property type="project" value="TreeGrafter"/>
</dbReference>
<dbReference type="GO" id="GO:0000166">
    <property type="term" value="F:nucleotide binding"/>
    <property type="evidence" value="ECO:0007669"/>
    <property type="project" value="TreeGrafter"/>
</dbReference>
<dbReference type="CDD" id="cd11740">
    <property type="entry name" value="YajQ_like"/>
    <property type="match status" value="1"/>
</dbReference>
<dbReference type="Gene3D" id="3.30.70.990">
    <property type="entry name" value="YajQ-like, domain 2"/>
    <property type="match status" value="1"/>
</dbReference>
<dbReference type="HAMAP" id="MF_00632">
    <property type="entry name" value="YajQ"/>
    <property type="match status" value="1"/>
</dbReference>
<dbReference type="InterPro" id="IPR007551">
    <property type="entry name" value="DUF520"/>
</dbReference>
<dbReference type="InterPro" id="IPR035570">
    <property type="entry name" value="UPF0234_N"/>
</dbReference>
<dbReference type="InterPro" id="IPR036183">
    <property type="entry name" value="YajQ-like_sf"/>
</dbReference>
<dbReference type="NCBIfam" id="NF003819">
    <property type="entry name" value="PRK05412.1"/>
    <property type="match status" value="1"/>
</dbReference>
<dbReference type="PANTHER" id="PTHR30476">
    <property type="entry name" value="UPF0234 PROTEIN YAJQ"/>
    <property type="match status" value="1"/>
</dbReference>
<dbReference type="PANTHER" id="PTHR30476:SF0">
    <property type="entry name" value="UPF0234 PROTEIN YAJQ"/>
    <property type="match status" value="1"/>
</dbReference>
<dbReference type="Pfam" id="PF04461">
    <property type="entry name" value="DUF520"/>
    <property type="match status" value="1"/>
</dbReference>
<dbReference type="SUPFAM" id="SSF89963">
    <property type="entry name" value="YajQ-like"/>
    <property type="match status" value="2"/>
</dbReference>
<comment type="function">
    <text evidence="1">Nucleotide-binding protein.</text>
</comment>
<comment type="similarity">
    <text evidence="1">Belongs to the YajQ family.</text>
</comment>